<evidence type="ECO:0000255" key="1">
    <source>
        <dbReference type="HAMAP-Rule" id="MF_00050"/>
    </source>
</evidence>
<name>EFTS_BORBZ</name>
<reference key="1">
    <citation type="journal article" date="2011" name="J. Bacteriol.">
        <title>Whole-genome sequences of thirteen isolates of Borrelia burgdorferi.</title>
        <authorList>
            <person name="Schutzer S.E."/>
            <person name="Fraser-Liggett C.M."/>
            <person name="Casjens S.R."/>
            <person name="Qiu W.G."/>
            <person name="Dunn J.J."/>
            <person name="Mongodin E.F."/>
            <person name="Luft B.J."/>
        </authorList>
    </citation>
    <scope>NUCLEOTIDE SEQUENCE [LARGE SCALE GENOMIC DNA]</scope>
    <source>
        <strain>ZS7</strain>
    </source>
</reference>
<feature type="chain" id="PRO_1000116695" description="Elongation factor Ts">
    <location>
        <begin position="1"/>
        <end position="279"/>
    </location>
</feature>
<feature type="region of interest" description="Involved in Mg(2+) ion dislocation from EF-Tu" evidence="1">
    <location>
        <begin position="80"/>
        <end position="83"/>
    </location>
</feature>
<dbReference type="EMBL" id="CP001205">
    <property type="protein sequence ID" value="ACK74922.1"/>
    <property type="molecule type" value="Genomic_DNA"/>
</dbReference>
<dbReference type="RefSeq" id="WP_012597379.1">
    <property type="nucleotide sequence ID" value="NC_011728.1"/>
</dbReference>
<dbReference type="SMR" id="B7J155"/>
<dbReference type="KEGG" id="bbz:BbuZS7_0122"/>
<dbReference type="HOGENOM" id="CLU_047155_0_0_12"/>
<dbReference type="Proteomes" id="UP000006901">
    <property type="component" value="Chromosome"/>
</dbReference>
<dbReference type="GO" id="GO:0005737">
    <property type="term" value="C:cytoplasm"/>
    <property type="evidence" value="ECO:0007669"/>
    <property type="project" value="UniProtKB-SubCell"/>
</dbReference>
<dbReference type="GO" id="GO:0003746">
    <property type="term" value="F:translation elongation factor activity"/>
    <property type="evidence" value="ECO:0007669"/>
    <property type="project" value="UniProtKB-UniRule"/>
</dbReference>
<dbReference type="CDD" id="cd14275">
    <property type="entry name" value="UBA_EF-Ts"/>
    <property type="match status" value="1"/>
</dbReference>
<dbReference type="FunFam" id="1.10.8.10:FF:000001">
    <property type="entry name" value="Elongation factor Ts"/>
    <property type="match status" value="1"/>
</dbReference>
<dbReference type="Gene3D" id="1.10.286.20">
    <property type="match status" value="1"/>
</dbReference>
<dbReference type="Gene3D" id="1.10.8.10">
    <property type="entry name" value="DNA helicase RuvA subunit, C-terminal domain"/>
    <property type="match status" value="1"/>
</dbReference>
<dbReference type="Gene3D" id="3.30.479.20">
    <property type="entry name" value="Elongation factor Ts, dimerisation domain"/>
    <property type="match status" value="2"/>
</dbReference>
<dbReference type="HAMAP" id="MF_00050">
    <property type="entry name" value="EF_Ts"/>
    <property type="match status" value="1"/>
</dbReference>
<dbReference type="InterPro" id="IPR036402">
    <property type="entry name" value="EF-Ts_dimer_sf"/>
</dbReference>
<dbReference type="InterPro" id="IPR001816">
    <property type="entry name" value="Transl_elong_EFTs/EF1B"/>
</dbReference>
<dbReference type="InterPro" id="IPR014039">
    <property type="entry name" value="Transl_elong_EFTs/EF1B_dimer"/>
</dbReference>
<dbReference type="InterPro" id="IPR018101">
    <property type="entry name" value="Transl_elong_Ts_CS"/>
</dbReference>
<dbReference type="InterPro" id="IPR009060">
    <property type="entry name" value="UBA-like_sf"/>
</dbReference>
<dbReference type="NCBIfam" id="TIGR00116">
    <property type="entry name" value="tsf"/>
    <property type="match status" value="1"/>
</dbReference>
<dbReference type="PANTHER" id="PTHR11741">
    <property type="entry name" value="ELONGATION FACTOR TS"/>
    <property type="match status" value="1"/>
</dbReference>
<dbReference type="PANTHER" id="PTHR11741:SF0">
    <property type="entry name" value="ELONGATION FACTOR TS, MITOCHONDRIAL"/>
    <property type="match status" value="1"/>
</dbReference>
<dbReference type="Pfam" id="PF00889">
    <property type="entry name" value="EF_TS"/>
    <property type="match status" value="1"/>
</dbReference>
<dbReference type="SUPFAM" id="SSF54713">
    <property type="entry name" value="Elongation factor Ts (EF-Ts), dimerisation domain"/>
    <property type="match status" value="2"/>
</dbReference>
<dbReference type="SUPFAM" id="SSF46934">
    <property type="entry name" value="UBA-like"/>
    <property type="match status" value="1"/>
</dbReference>
<dbReference type="PROSITE" id="PS01126">
    <property type="entry name" value="EF_TS_1"/>
    <property type="match status" value="1"/>
</dbReference>
<dbReference type="PROSITE" id="PS01127">
    <property type="entry name" value="EF_TS_2"/>
    <property type="match status" value="1"/>
</dbReference>
<gene>
    <name evidence="1" type="primary">tsf</name>
    <name type="ordered locus">BbuZS7_0122</name>
</gene>
<comment type="function">
    <text evidence="1">Associates with the EF-Tu.GDP complex and induces the exchange of GDP to GTP. It remains bound to the aminoacyl-tRNA.EF-Tu.GTP complex up to the GTP hydrolysis stage on the ribosome.</text>
</comment>
<comment type="subcellular location">
    <subcellularLocation>
        <location evidence="1">Cytoplasm</location>
    </subcellularLocation>
</comment>
<comment type="similarity">
    <text evidence="1">Belongs to the EF-Ts family.</text>
</comment>
<organism>
    <name type="scientific">Borreliella burgdorferi (strain ZS7)</name>
    <name type="common">Borrelia burgdorferi</name>
    <dbReference type="NCBI Taxonomy" id="445985"/>
    <lineage>
        <taxon>Bacteria</taxon>
        <taxon>Pseudomonadati</taxon>
        <taxon>Spirochaetota</taxon>
        <taxon>Spirochaetia</taxon>
        <taxon>Spirochaetales</taxon>
        <taxon>Borreliaceae</taxon>
        <taxon>Borreliella</taxon>
    </lineage>
</organism>
<sequence length="279" mass="31209">MSIISPQDVKKLREETNAGFGDCKKALSVAGGDFELAKKKLREMGIASAEKRLDRDAKEGRVFSYSNNIHAGLLLVSCETDFVALNHNFVNFGNSLIKELVESGRNSLATSQELELKNLAATIKENIQVKKIFITEIQSNEFVKIYLHGEQSKIGVLVKLKVDDFSKTEDKMLQDFAMDLALHVAALAPIYLRNDDVCPNYIKEQEEIFAKQLELSGKSESIVKGIVAGKIKKHLAEISLLEQGFVKNDKLTVREMLEEVSKAISSKIEIVEFKYLRIG</sequence>
<protein>
    <recommendedName>
        <fullName evidence="1">Elongation factor Ts</fullName>
        <shortName evidence="1">EF-Ts</shortName>
    </recommendedName>
</protein>
<proteinExistence type="inferred from homology"/>
<accession>B7J155</accession>
<keyword id="KW-0963">Cytoplasm</keyword>
<keyword id="KW-0251">Elongation factor</keyword>
<keyword id="KW-0648">Protein biosynthesis</keyword>